<proteinExistence type="inferred from homology"/>
<feature type="chain" id="PRO_0000139957" description="Ribonuclease PH">
    <location>
        <begin position="1"/>
        <end position="237"/>
    </location>
</feature>
<feature type="binding site" evidence="1">
    <location>
        <position position="86"/>
    </location>
    <ligand>
        <name>phosphate</name>
        <dbReference type="ChEBI" id="CHEBI:43474"/>
        <note>substrate</note>
    </ligand>
</feature>
<feature type="binding site" evidence="1">
    <location>
        <begin position="124"/>
        <end position="126"/>
    </location>
    <ligand>
        <name>phosphate</name>
        <dbReference type="ChEBI" id="CHEBI:43474"/>
        <note>substrate</note>
    </ligand>
</feature>
<protein>
    <recommendedName>
        <fullName evidence="1">Ribonuclease PH</fullName>
        <shortName evidence="1">RNase PH</shortName>
        <ecNumber evidence="1">2.7.7.56</ecNumber>
    </recommendedName>
    <alternativeName>
        <fullName evidence="1">tRNA nucleotidyltransferase</fullName>
    </alternativeName>
</protein>
<name>RNPH_ZYMMO</name>
<keyword id="KW-0548">Nucleotidyltransferase</keyword>
<keyword id="KW-1185">Reference proteome</keyword>
<keyword id="KW-0694">RNA-binding</keyword>
<keyword id="KW-0698">rRNA processing</keyword>
<keyword id="KW-0808">Transferase</keyword>
<keyword id="KW-0819">tRNA processing</keyword>
<keyword id="KW-0820">tRNA-binding</keyword>
<gene>
    <name evidence="1" type="primary">rph</name>
    <name type="ordered locus">ZMO0014</name>
</gene>
<reference key="1">
    <citation type="journal article" date="2005" name="Nat. Biotechnol.">
        <title>The genome sequence of the ethanologenic bacterium Zymomonas mobilis ZM4.</title>
        <authorList>
            <person name="Seo J.-S."/>
            <person name="Chong H."/>
            <person name="Park H.S."/>
            <person name="Yoon K.-O."/>
            <person name="Jung C."/>
            <person name="Kim J.J."/>
            <person name="Hong J.H."/>
            <person name="Kim H."/>
            <person name="Kim J.-H."/>
            <person name="Kil J.-I."/>
            <person name="Park C.J."/>
            <person name="Oh H.-M."/>
            <person name="Lee J.-S."/>
            <person name="Jin S.-J."/>
            <person name="Um H.-W."/>
            <person name="Lee H.-J."/>
            <person name="Oh S.-J."/>
            <person name="Kim J.Y."/>
            <person name="Kang H.L."/>
            <person name="Lee S.Y."/>
            <person name="Lee K.J."/>
            <person name="Kang H.S."/>
        </authorList>
    </citation>
    <scope>NUCLEOTIDE SEQUENCE [LARGE SCALE GENOMIC DNA]</scope>
    <source>
        <strain>ATCC 31821 / ZM4 / CP4</strain>
    </source>
</reference>
<accession>Q5NRL6</accession>
<comment type="function">
    <text evidence="1">Phosphorolytic 3'-5' exoribonuclease that plays an important role in tRNA 3'-end maturation. Removes nucleotide residues following the 3'-CCA terminus of tRNAs; can also add nucleotides to the ends of RNA molecules by using nucleoside diphosphates as substrates, but this may not be physiologically important. Probably plays a role in initiation of 16S rRNA degradation (leading to ribosome degradation) during starvation.</text>
</comment>
<comment type="catalytic activity">
    <reaction evidence="1">
        <text>tRNA(n+1) + phosphate = tRNA(n) + a ribonucleoside 5'-diphosphate</text>
        <dbReference type="Rhea" id="RHEA:10628"/>
        <dbReference type="Rhea" id="RHEA-COMP:17343"/>
        <dbReference type="Rhea" id="RHEA-COMP:17344"/>
        <dbReference type="ChEBI" id="CHEBI:43474"/>
        <dbReference type="ChEBI" id="CHEBI:57930"/>
        <dbReference type="ChEBI" id="CHEBI:173114"/>
        <dbReference type="EC" id="2.7.7.56"/>
    </reaction>
</comment>
<comment type="subunit">
    <text evidence="1">Homohexameric ring arranged as a trimer of dimers.</text>
</comment>
<comment type="similarity">
    <text evidence="1">Belongs to the RNase PH family.</text>
</comment>
<sequence>MRPSGRTPDQLRSLSIETGFTRHAEGSCLISFGDTRVLVTASLEERLPSWLRGKGQGWVTAEYGMLPRSTHSRTNREAARGKQSGRTQEIQRLIGRSLRAGIDLKKLGERQITIDCDVLQADGGTRTASISGGWVALRLAVNKLLASGQLTEDPIISQVAAVSCGISQGVPVLDLDYAEDSTAEADANFVMMGDSRLIEVQASAEGAPYDEEGLLRLLRLARMGCQQIFAEQKKAVA</sequence>
<organism>
    <name type="scientific">Zymomonas mobilis subsp. mobilis (strain ATCC 31821 / ZM4 / CP4)</name>
    <dbReference type="NCBI Taxonomy" id="264203"/>
    <lineage>
        <taxon>Bacteria</taxon>
        <taxon>Pseudomonadati</taxon>
        <taxon>Pseudomonadota</taxon>
        <taxon>Alphaproteobacteria</taxon>
        <taxon>Sphingomonadales</taxon>
        <taxon>Zymomonadaceae</taxon>
        <taxon>Zymomonas</taxon>
    </lineage>
</organism>
<evidence type="ECO:0000255" key="1">
    <source>
        <dbReference type="HAMAP-Rule" id="MF_00564"/>
    </source>
</evidence>
<dbReference type="EC" id="2.7.7.56" evidence="1"/>
<dbReference type="EMBL" id="AE008692">
    <property type="protein sequence ID" value="AAV88638.1"/>
    <property type="molecule type" value="Genomic_DNA"/>
</dbReference>
<dbReference type="RefSeq" id="WP_011240002.1">
    <property type="nucleotide sequence ID" value="NZ_CP035711.1"/>
</dbReference>
<dbReference type="SMR" id="Q5NRL6"/>
<dbReference type="STRING" id="264203.ZMO0014"/>
<dbReference type="GeneID" id="79904716"/>
<dbReference type="KEGG" id="zmo:ZMO0014"/>
<dbReference type="eggNOG" id="COG0689">
    <property type="taxonomic scope" value="Bacteria"/>
</dbReference>
<dbReference type="HOGENOM" id="CLU_050858_0_0_5"/>
<dbReference type="Proteomes" id="UP000001173">
    <property type="component" value="Chromosome"/>
</dbReference>
<dbReference type="GO" id="GO:0000175">
    <property type="term" value="F:3'-5'-RNA exonuclease activity"/>
    <property type="evidence" value="ECO:0007669"/>
    <property type="project" value="UniProtKB-UniRule"/>
</dbReference>
<dbReference type="GO" id="GO:0000049">
    <property type="term" value="F:tRNA binding"/>
    <property type="evidence" value="ECO:0007669"/>
    <property type="project" value="UniProtKB-UniRule"/>
</dbReference>
<dbReference type="GO" id="GO:0009022">
    <property type="term" value="F:tRNA nucleotidyltransferase activity"/>
    <property type="evidence" value="ECO:0007669"/>
    <property type="project" value="UniProtKB-UniRule"/>
</dbReference>
<dbReference type="GO" id="GO:0016075">
    <property type="term" value="P:rRNA catabolic process"/>
    <property type="evidence" value="ECO:0007669"/>
    <property type="project" value="UniProtKB-UniRule"/>
</dbReference>
<dbReference type="GO" id="GO:0006364">
    <property type="term" value="P:rRNA processing"/>
    <property type="evidence" value="ECO:0007669"/>
    <property type="project" value="UniProtKB-KW"/>
</dbReference>
<dbReference type="GO" id="GO:0008033">
    <property type="term" value="P:tRNA processing"/>
    <property type="evidence" value="ECO:0007669"/>
    <property type="project" value="UniProtKB-UniRule"/>
</dbReference>
<dbReference type="CDD" id="cd11362">
    <property type="entry name" value="RNase_PH_bact"/>
    <property type="match status" value="1"/>
</dbReference>
<dbReference type="FunFam" id="3.30.230.70:FF:000003">
    <property type="entry name" value="Ribonuclease PH"/>
    <property type="match status" value="1"/>
</dbReference>
<dbReference type="Gene3D" id="3.30.230.70">
    <property type="entry name" value="GHMP Kinase, N-terminal domain"/>
    <property type="match status" value="1"/>
</dbReference>
<dbReference type="HAMAP" id="MF_00564">
    <property type="entry name" value="RNase_PH"/>
    <property type="match status" value="1"/>
</dbReference>
<dbReference type="InterPro" id="IPR001247">
    <property type="entry name" value="ExoRNase_PH_dom1"/>
</dbReference>
<dbReference type="InterPro" id="IPR015847">
    <property type="entry name" value="ExoRNase_PH_dom2"/>
</dbReference>
<dbReference type="InterPro" id="IPR036345">
    <property type="entry name" value="ExoRNase_PH_dom2_sf"/>
</dbReference>
<dbReference type="InterPro" id="IPR027408">
    <property type="entry name" value="PNPase/RNase_PH_dom_sf"/>
</dbReference>
<dbReference type="InterPro" id="IPR020568">
    <property type="entry name" value="Ribosomal_Su5_D2-typ_SF"/>
</dbReference>
<dbReference type="InterPro" id="IPR050080">
    <property type="entry name" value="RNase_PH"/>
</dbReference>
<dbReference type="InterPro" id="IPR002381">
    <property type="entry name" value="RNase_PH_bac-type"/>
</dbReference>
<dbReference type="InterPro" id="IPR018336">
    <property type="entry name" value="RNase_PH_CS"/>
</dbReference>
<dbReference type="NCBIfam" id="TIGR01966">
    <property type="entry name" value="RNasePH"/>
    <property type="match status" value="1"/>
</dbReference>
<dbReference type="PANTHER" id="PTHR11953">
    <property type="entry name" value="EXOSOME COMPLEX COMPONENT"/>
    <property type="match status" value="1"/>
</dbReference>
<dbReference type="PANTHER" id="PTHR11953:SF0">
    <property type="entry name" value="EXOSOME COMPLEX COMPONENT RRP41"/>
    <property type="match status" value="1"/>
</dbReference>
<dbReference type="Pfam" id="PF01138">
    <property type="entry name" value="RNase_PH"/>
    <property type="match status" value="1"/>
</dbReference>
<dbReference type="Pfam" id="PF03725">
    <property type="entry name" value="RNase_PH_C"/>
    <property type="match status" value="1"/>
</dbReference>
<dbReference type="SUPFAM" id="SSF55666">
    <property type="entry name" value="Ribonuclease PH domain 2-like"/>
    <property type="match status" value="1"/>
</dbReference>
<dbReference type="SUPFAM" id="SSF54211">
    <property type="entry name" value="Ribosomal protein S5 domain 2-like"/>
    <property type="match status" value="1"/>
</dbReference>
<dbReference type="PROSITE" id="PS01277">
    <property type="entry name" value="RIBONUCLEASE_PH"/>
    <property type="match status" value="1"/>
</dbReference>